<comment type="function">
    <text evidence="1">NDH-1 shuttles electrons from NADH, via FMN and iron-sulfur (Fe-S) centers, to quinones in the respiratory chain. The immediate electron acceptor for the enzyme in this species is believed to be ubiquinone. Couples the redox reaction to proton translocation (for every two electrons transferred, four hydrogen ions are translocated across the cytoplasmic membrane), and thus conserves the redox energy in a proton gradient. This subunit may bind ubiquinone.</text>
</comment>
<comment type="catalytic activity">
    <reaction evidence="1">
        <text>a quinone + NADH + 5 H(+)(in) = a quinol + NAD(+) + 4 H(+)(out)</text>
        <dbReference type="Rhea" id="RHEA:57888"/>
        <dbReference type="ChEBI" id="CHEBI:15378"/>
        <dbReference type="ChEBI" id="CHEBI:24646"/>
        <dbReference type="ChEBI" id="CHEBI:57540"/>
        <dbReference type="ChEBI" id="CHEBI:57945"/>
        <dbReference type="ChEBI" id="CHEBI:132124"/>
    </reaction>
</comment>
<comment type="subunit">
    <text evidence="1">NDH-1 is composed of 14 different subunits. Subunits NuoA, H, J, K, L, M, N constitute the membrane sector of the complex.</text>
</comment>
<comment type="subcellular location">
    <subcellularLocation>
        <location evidence="1">Cell inner membrane</location>
        <topology evidence="1">Multi-pass membrane protein</topology>
    </subcellularLocation>
</comment>
<comment type="similarity">
    <text evidence="1">Belongs to the complex I subunit 1 family.</text>
</comment>
<gene>
    <name evidence="1" type="primary">nuoH</name>
    <name type="ordered locus">Swit_2992</name>
</gene>
<organism>
    <name type="scientific">Rhizorhabdus wittichii (strain DSM 6014 / CCUG 31198 / JCM 15750 / NBRC 105917 / EY 4224 / RW1)</name>
    <name type="common">Sphingomonas wittichii</name>
    <dbReference type="NCBI Taxonomy" id="392499"/>
    <lineage>
        <taxon>Bacteria</taxon>
        <taxon>Pseudomonadati</taxon>
        <taxon>Pseudomonadota</taxon>
        <taxon>Alphaproteobacteria</taxon>
        <taxon>Sphingomonadales</taxon>
        <taxon>Sphingomonadaceae</taxon>
        <taxon>Rhizorhabdus</taxon>
    </lineage>
</organism>
<keyword id="KW-0997">Cell inner membrane</keyword>
<keyword id="KW-1003">Cell membrane</keyword>
<keyword id="KW-0472">Membrane</keyword>
<keyword id="KW-0520">NAD</keyword>
<keyword id="KW-0874">Quinone</keyword>
<keyword id="KW-1185">Reference proteome</keyword>
<keyword id="KW-1278">Translocase</keyword>
<keyword id="KW-0812">Transmembrane</keyword>
<keyword id="KW-1133">Transmembrane helix</keyword>
<keyword id="KW-0830">Ubiquinone</keyword>
<dbReference type="EC" id="7.1.1.-" evidence="1"/>
<dbReference type="EMBL" id="CP000699">
    <property type="protein sequence ID" value="ABQ69343.1"/>
    <property type="molecule type" value="Genomic_DNA"/>
</dbReference>
<dbReference type="SMR" id="A5VAM7"/>
<dbReference type="STRING" id="392499.Swit_2992"/>
<dbReference type="PaxDb" id="392499-Swit_2992"/>
<dbReference type="KEGG" id="swi:Swit_2992"/>
<dbReference type="eggNOG" id="COG1005">
    <property type="taxonomic scope" value="Bacteria"/>
</dbReference>
<dbReference type="HOGENOM" id="CLU_015134_0_1_5"/>
<dbReference type="OrthoDB" id="9803734at2"/>
<dbReference type="Proteomes" id="UP000001989">
    <property type="component" value="Chromosome"/>
</dbReference>
<dbReference type="GO" id="GO:0005886">
    <property type="term" value="C:plasma membrane"/>
    <property type="evidence" value="ECO:0007669"/>
    <property type="project" value="UniProtKB-SubCell"/>
</dbReference>
<dbReference type="GO" id="GO:0003954">
    <property type="term" value="F:NADH dehydrogenase activity"/>
    <property type="evidence" value="ECO:0007669"/>
    <property type="project" value="TreeGrafter"/>
</dbReference>
<dbReference type="GO" id="GO:0016655">
    <property type="term" value="F:oxidoreductase activity, acting on NAD(P)H, quinone or similar compound as acceptor"/>
    <property type="evidence" value="ECO:0007669"/>
    <property type="project" value="UniProtKB-UniRule"/>
</dbReference>
<dbReference type="GO" id="GO:0048038">
    <property type="term" value="F:quinone binding"/>
    <property type="evidence" value="ECO:0007669"/>
    <property type="project" value="UniProtKB-KW"/>
</dbReference>
<dbReference type="GO" id="GO:0009060">
    <property type="term" value="P:aerobic respiration"/>
    <property type="evidence" value="ECO:0007669"/>
    <property type="project" value="TreeGrafter"/>
</dbReference>
<dbReference type="HAMAP" id="MF_01350">
    <property type="entry name" value="NDH1_NuoH"/>
    <property type="match status" value="1"/>
</dbReference>
<dbReference type="InterPro" id="IPR001694">
    <property type="entry name" value="NADH_UbQ_OxRdtase_su1/FPO"/>
</dbReference>
<dbReference type="InterPro" id="IPR018086">
    <property type="entry name" value="NADH_UbQ_OxRdtase_su1_CS"/>
</dbReference>
<dbReference type="NCBIfam" id="NF004741">
    <property type="entry name" value="PRK06076.1-2"/>
    <property type="match status" value="1"/>
</dbReference>
<dbReference type="NCBIfam" id="NF004745">
    <property type="entry name" value="PRK06076.1-6"/>
    <property type="match status" value="1"/>
</dbReference>
<dbReference type="PANTHER" id="PTHR11432">
    <property type="entry name" value="NADH DEHYDROGENASE SUBUNIT 1"/>
    <property type="match status" value="1"/>
</dbReference>
<dbReference type="PANTHER" id="PTHR11432:SF3">
    <property type="entry name" value="NADH-UBIQUINONE OXIDOREDUCTASE CHAIN 1"/>
    <property type="match status" value="1"/>
</dbReference>
<dbReference type="Pfam" id="PF00146">
    <property type="entry name" value="NADHdh"/>
    <property type="match status" value="1"/>
</dbReference>
<dbReference type="PROSITE" id="PS00668">
    <property type="entry name" value="COMPLEX1_ND1_2"/>
    <property type="match status" value="1"/>
</dbReference>
<feature type="chain" id="PRO_1000143621" description="NADH-quinone oxidoreductase subunit H">
    <location>
        <begin position="1"/>
        <end position="348"/>
    </location>
</feature>
<feature type="transmembrane region" description="Helical" evidence="1">
    <location>
        <begin position="21"/>
        <end position="41"/>
    </location>
</feature>
<feature type="transmembrane region" description="Helical" evidence="1">
    <location>
        <begin position="87"/>
        <end position="107"/>
    </location>
</feature>
<feature type="transmembrane region" description="Helical" evidence="1">
    <location>
        <begin position="120"/>
        <end position="140"/>
    </location>
</feature>
<feature type="transmembrane region" description="Helical" evidence="1">
    <location>
        <begin position="166"/>
        <end position="186"/>
    </location>
</feature>
<feature type="transmembrane region" description="Helical" evidence="1">
    <location>
        <begin position="193"/>
        <end position="213"/>
    </location>
</feature>
<feature type="transmembrane region" description="Helical" evidence="1">
    <location>
        <begin position="258"/>
        <end position="278"/>
    </location>
</feature>
<feature type="transmembrane region" description="Helical" evidence="1">
    <location>
        <begin position="283"/>
        <end position="303"/>
    </location>
</feature>
<feature type="transmembrane region" description="Helical" evidence="1">
    <location>
        <begin position="323"/>
        <end position="343"/>
    </location>
</feature>
<evidence type="ECO:0000255" key="1">
    <source>
        <dbReference type="HAMAP-Rule" id="MF_01350"/>
    </source>
</evidence>
<proteinExistence type="inferred from homology"/>
<accession>A5VAM7</accession>
<protein>
    <recommendedName>
        <fullName evidence="1">NADH-quinone oxidoreductase subunit H</fullName>
        <ecNumber evidence="1">7.1.1.-</ecNumber>
    </recommendedName>
    <alternativeName>
        <fullName evidence="1">NADH dehydrogenase I subunit H</fullName>
    </alternativeName>
    <alternativeName>
        <fullName evidence="1">NDH-1 subunit H</fullName>
    </alternativeName>
</protein>
<name>NUOH_RHIWR</name>
<reference key="1">
    <citation type="journal article" date="2010" name="J. Bacteriol.">
        <title>Genome sequence of the dioxin-mineralizing bacterium Sphingomonas wittichii RW1.</title>
        <authorList>
            <person name="Miller T.R."/>
            <person name="Delcher A.L."/>
            <person name="Salzberg S.L."/>
            <person name="Saunders E."/>
            <person name="Detter J.C."/>
            <person name="Halden R.U."/>
        </authorList>
    </citation>
    <scope>NUCLEOTIDE SEQUENCE [LARGE SCALE GENOMIC DNA]</scope>
    <source>
        <strain>DSM 6014 / CCUG 31198 / JCM 15750 / NBRC 105917 / EY 4224 / RW1</strain>
    </source>
</reference>
<sequence length="348" mass="38762">MTALFQSWGLPYDWAWFVSTIIGILVIALPLMLAVAMIIYADRKIWAAMALRRGPNVVGPWGLLQSFADGAKVFLQETIIPAAANKGLFLLAPIITFTVALIVWAVIPFAPGVVLADINIGLLYVLAASSIGVYGVIIAGWASNSKYPFYSALRAAAQMVSYEVSIGFVLISVVLWTGSFNMSAIVEGQRAHIFGFINGYGFNPLLFPMAVVFLISAMAETARTPFDLTEAESELVAGYQTEYSSMSFALYWLGEYANVILMCGLNAILFWGGWLPPVDWAPLYMVPGIIWFFAKLLFFFFVFSWVKATVPRYRYDQLMRLGWKVFLPLSLFWVFLVSGWLMLTRYGV</sequence>